<protein>
    <recommendedName>
        <fullName evidence="2">Ornithine carbamoyltransferase</fullName>
        <shortName evidence="2">OTCase</shortName>
        <ecNumber evidence="2">2.1.3.3</ecNumber>
    </recommendedName>
</protein>
<reference key="1">
    <citation type="journal article" date="2010" name="Genome Biol.">
        <title>Structure and dynamics of the pan-genome of Streptococcus pneumoniae and closely related species.</title>
        <authorList>
            <person name="Donati C."/>
            <person name="Hiller N.L."/>
            <person name="Tettelin H."/>
            <person name="Muzzi A."/>
            <person name="Croucher N.J."/>
            <person name="Angiuoli S.V."/>
            <person name="Oggioni M."/>
            <person name="Dunning Hotopp J.C."/>
            <person name="Hu F.Z."/>
            <person name="Riley D.R."/>
            <person name="Covacci A."/>
            <person name="Mitchell T.J."/>
            <person name="Bentley S.D."/>
            <person name="Kilian M."/>
            <person name="Ehrlich G.D."/>
            <person name="Rappuoli R."/>
            <person name="Moxon E.R."/>
            <person name="Masignani V."/>
        </authorList>
    </citation>
    <scope>NUCLEOTIDE SEQUENCE [LARGE SCALE GENOMIC DNA]</scope>
    <source>
        <strain>70585</strain>
    </source>
</reference>
<accession>C1CAZ4</accession>
<comment type="function">
    <text evidence="1">Reversibly catalyzes the transfer of the carbamoyl group from carbamoyl phosphate (CP) to the N(epsilon) atom of ornithine (ORN) to produce L-citrulline.</text>
</comment>
<comment type="catalytic activity">
    <reaction evidence="2">
        <text>carbamoyl phosphate + L-ornithine = L-citrulline + phosphate + H(+)</text>
        <dbReference type="Rhea" id="RHEA:19513"/>
        <dbReference type="ChEBI" id="CHEBI:15378"/>
        <dbReference type="ChEBI" id="CHEBI:43474"/>
        <dbReference type="ChEBI" id="CHEBI:46911"/>
        <dbReference type="ChEBI" id="CHEBI:57743"/>
        <dbReference type="ChEBI" id="CHEBI:58228"/>
        <dbReference type="EC" id="2.1.3.3"/>
    </reaction>
</comment>
<comment type="pathway">
    <text evidence="2">Amino-acid degradation; L-arginine degradation via ADI pathway; carbamoyl phosphate from L-arginine: step 2/2.</text>
</comment>
<comment type="subcellular location">
    <subcellularLocation>
        <location evidence="2">Cytoplasm</location>
    </subcellularLocation>
</comment>
<comment type="similarity">
    <text evidence="2">Belongs to the aspartate/ornithine carbamoyltransferase superfamily. OTCase family.</text>
</comment>
<name>OTC_STRP7</name>
<keyword id="KW-0056">Arginine metabolism</keyword>
<keyword id="KW-0963">Cytoplasm</keyword>
<keyword id="KW-0808">Transferase</keyword>
<sequence>MTNSVFQGRSFLAEKDFTRAELEYLIGLSAHLKDLKKRNIQHHYLAGKNIALLFEKTSTRTRAAFTTAAIDLGAHPEYLGANDIQLGKKESTEDTAKVLGRMFDGIEFRGFSQRMVEELAEFSGVPVWNGLTDEWHPTQMLADYLTVQENFGRLEGLTLVYCGDGRNNVANSLLVTGAILGVNVHIFSPKELFPEKEIVELAEGFAKESGAHVLITEDADEAVKDADVLYTDVWVSMGEEDKFAERVALLKPYQVNMDLVKKAGNENLIFLHCLPAFHDTHTVYGKDVAEKFGVEEMEVTDEVFRSKYARHFDQAENRMHTIKAVMAATLGNLYIPKV</sequence>
<organism>
    <name type="scientific">Streptococcus pneumoniae (strain 70585)</name>
    <dbReference type="NCBI Taxonomy" id="488221"/>
    <lineage>
        <taxon>Bacteria</taxon>
        <taxon>Bacillati</taxon>
        <taxon>Bacillota</taxon>
        <taxon>Bacilli</taxon>
        <taxon>Lactobacillales</taxon>
        <taxon>Streptococcaceae</taxon>
        <taxon>Streptococcus</taxon>
    </lineage>
</organism>
<dbReference type="EC" id="2.1.3.3" evidence="2"/>
<dbReference type="EMBL" id="CP000918">
    <property type="protein sequence ID" value="ACO16998.1"/>
    <property type="molecule type" value="Genomic_DNA"/>
</dbReference>
<dbReference type="SMR" id="C1CAZ4"/>
<dbReference type="KEGG" id="snm:SP70585_2276"/>
<dbReference type="HOGENOM" id="CLU_043846_3_1_9"/>
<dbReference type="UniPathway" id="UPA00254">
    <property type="reaction ID" value="UER00365"/>
</dbReference>
<dbReference type="Proteomes" id="UP000002211">
    <property type="component" value="Chromosome"/>
</dbReference>
<dbReference type="GO" id="GO:0005737">
    <property type="term" value="C:cytoplasm"/>
    <property type="evidence" value="ECO:0007669"/>
    <property type="project" value="UniProtKB-SubCell"/>
</dbReference>
<dbReference type="GO" id="GO:0016597">
    <property type="term" value="F:amino acid binding"/>
    <property type="evidence" value="ECO:0007669"/>
    <property type="project" value="InterPro"/>
</dbReference>
<dbReference type="GO" id="GO:0004585">
    <property type="term" value="F:ornithine carbamoyltransferase activity"/>
    <property type="evidence" value="ECO:0007669"/>
    <property type="project" value="UniProtKB-UniRule"/>
</dbReference>
<dbReference type="GO" id="GO:0042450">
    <property type="term" value="P:arginine biosynthetic process via ornithine"/>
    <property type="evidence" value="ECO:0007669"/>
    <property type="project" value="TreeGrafter"/>
</dbReference>
<dbReference type="GO" id="GO:0019547">
    <property type="term" value="P:arginine catabolic process to ornithine"/>
    <property type="evidence" value="ECO:0007669"/>
    <property type="project" value="UniProtKB-UniRule"/>
</dbReference>
<dbReference type="GO" id="GO:0019240">
    <property type="term" value="P:citrulline biosynthetic process"/>
    <property type="evidence" value="ECO:0007669"/>
    <property type="project" value="TreeGrafter"/>
</dbReference>
<dbReference type="FunFam" id="3.40.50.1370:FF:000004">
    <property type="entry name" value="Ornithine carbamoyltransferase"/>
    <property type="match status" value="1"/>
</dbReference>
<dbReference type="Gene3D" id="3.40.50.1370">
    <property type="entry name" value="Aspartate/ornithine carbamoyltransferase"/>
    <property type="match status" value="2"/>
</dbReference>
<dbReference type="HAMAP" id="MF_01109">
    <property type="entry name" value="OTCase"/>
    <property type="match status" value="1"/>
</dbReference>
<dbReference type="InterPro" id="IPR006132">
    <property type="entry name" value="Asp/Orn_carbamoyltranf_P-bd"/>
</dbReference>
<dbReference type="InterPro" id="IPR006130">
    <property type="entry name" value="Asp/Orn_carbamoylTrfase"/>
</dbReference>
<dbReference type="InterPro" id="IPR036901">
    <property type="entry name" value="Asp/Orn_carbamoylTrfase_sf"/>
</dbReference>
<dbReference type="InterPro" id="IPR006131">
    <property type="entry name" value="Asp_carbamoyltransf_Asp/Orn-bd"/>
</dbReference>
<dbReference type="InterPro" id="IPR002292">
    <property type="entry name" value="Orn/put_carbamltrans"/>
</dbReference>
<dbReference type="InterPro" id="IPR024904">
    <property type="entry name" value="OTCase_ArgI"/>
</dbReference>
<dbReference type="NCBIfam" id="TIGR00658">
    <property type="entry name" value="orni_carb_tr"/>
    <property type="match status" value="1"/>
</dbReference>
<dbReference type="NCBIfam" id="NF001986">
    <property type="entry name" value="PRK00779.1"/>
    <property type="match status" value="1"/>
</dbReference>
<dbReference type="PANTHER" id="PTHR45753:SF1">
    <property type="entry name" value="ORNITHINE CARBAMOYLTRANSFERASE, CATABOLIC"/>
    <property type="match status" value="1"/>
</dbReference>
<dbReference type="PANTHER" id="PTHR45753">
    <property type="entry name" value="ORNITHINE CARBAMOYLTRANSFERASE, MITOCHONDRIAL"/>
    <property type="match status" value="1"/>
</dbReference>
<dbReference type="Pfam" id="PF00185">
    <property type="entry name" value="OTCace"/>
    <property type="match status" value="1"/>
</dbReference>
<dbReference type="Pfam" id="PF02729">
    <property type="entry name" value="OTCace_N"/>
    <property type="match status" value="1"/>
</dbReference>
<dbReference type="PRINTS" id="PR00100">
    <property type="entry name" value="AOTCASE"/>
</dbReference>
<dbReference type="PRINTS" id="PR00102">
    <property type="entry name" value="OTCASE"/>
</dbReference>
<dbReference type="SUPFAM" id="SSF53671">
    <property type="entry name" value="Aspartate/ornithine carbamoyltransferase"/>
    <property type="match status" value="1"/>
</dbReference>
<dbReference type="PROSITE" id="PS00097">
    <property type="entry name" value="CARBAMOYLTRANSFERASE"/>
    <property type="match status" value="1"/>
</dbReference>
<gene>
    <name evidence="2" type="primary">arcB</name>
    <name type="ordered locus">SP70585_2276</name>
</gene>
<proteinExistence type="inferred from homology"/>
<feature type="chain" id="PRO_1000163985" description="Ornithine carbamoyltransferase">
    <location>
        <begin position="1"/>
        <end position="338"/>
    </location>
</feature>
<feature type="binding site" evidence="2">
    <location>
        <begin position="58"/>
        <end position="61"/>
    </location>
    <ligand>
        <name>carbamoyl phosphate</name>
        <dbReference type="ChEBI" id="CHEBI:58228"/>
    </ligand>
</feature>
<feature type="binding site" evidence="2">
    <location>
        <position position="85"/>
    </location>
    <ligand>
        <name>carbamoyl phosphate</name>
        <dbReference type="ChEBI" id="CHEBI:58228"/>
    </ligand>
</feature>
<feature type="binding site" evidence="2">
    <location>
        <position position="109"/>
    </location>
    <ligand>
        <name>carbamoyl phosphate</name>
        <dbReference type="ChEBI" id="CHEBI:58228"/>
    </ligand>
</feature>
<feature type="binding site" evidence="2">
    <location>
        <begin position="136"/>
        <end position="139"/>
    </location>
    <ligand>
        <name>carbamoyl phosphate</name>
        <dbReference type="ChEBI" id="CHEBI:58228"/>
    </ligand>
</feature>
<feature type="binding site" evidence="2">
    <location>
        <position position="168"/>
    </location>
    <ligand>
        <name>L-ornithine</name>
        <dbReference type="ChEBI" id="CHEBI:46911"/>
    </ligand>
</feature>
<feature type="binding site" evidence="2">
    <location>
        <position position="232"/>
    </location>
    <ligand>
        <name>L-ornithine</name>
        <dbReference type="ChEBI" id="CHEBI:46911"/>
    </ligand>
</feature>
<feature type="binding site" evidence="2">
    <location>
        <begin position="236"/>
        <end position="237"/>
    </location>
    <ligand>
        <name>L-ornithine</name>
        <dbReference type="ChEBI" id="CHEBI:46911"/>
    </ligand>
</feature>
<feature type="binding site" evidence="2">
    <location>
        <begin position="273"/>
        <end position="274"/>
    </location>
    <ligand>
        <name>carbamoyl phosphate</name>
        <dbReference type="ChEBI" id="CHEBI:58228"/>
    </ligand>
</feature>
<feature type="binding site" evidence="2">
    <location>
        <position position="318"/>
    </location>
    <ligand>
        <name>carbamoyl phosphate</name>
        <dbReference type="ChEBI" id="CHEBI:58228"/>
    </ligand>
</feature>
<evidence type="ECO:0000250" key="1"/>
<evidence type="ECO:0000255" key="2">
    <source>
        <dbReference type="HAMAP-Rule" id="MF_01109"/>
    </source>
</evidence>